<gene>
    <name type="primary">ALDH2B4</name>
    <name type="synonym">ALDH2</name>
    <name type="ordered locus">At3g48000</name>
    <name type="ORF">T17F15.130</name>
</gene>
<reference key="1">
    <citation type="journal article" date="2000" name="Gene">
        <title>Molecular and cellular characterizations of a cDNA clone encoding a novel isozyme of aldehyde dehydrogenase from rice.</title>
        <authorList>
            <person name="Li Y."/>
            <person name="Nakazono M."/>
            <person name="Tsutsumi N."/>
            <person name="Hirai A."/>
        </authorList>
    </citation>
    <scope>NUCLEOTIDE SEQUENCE [MRNA]</scope>
</reference>
<reference key="2">
    <citation type="journal article" date="2002" name="Plant Mol. Biol.">
        <title>Characterization of the aldehyde dehydrogenase gene families of Zea mays and Arabidopsis.</title>
        <authorList>
            <person name="Skibbe D.S."/>
            <person name="Liu F."/>
            <person name="Wen T.-J."/>
            <person name="Yandeau M.D."/>
            <person name="Cui X."/>
            <person name="Cao J."/>
            <person name="Simmons C.R."/>
            <person name="Schnable P.S."/>
        </authorList>
    </citation>
    <scope>NUCLEOTIDE SEQUENCE [MRNA]</scope>
    <scope>FUNCTION</scope>
</reference>
<reference key="3">
    <citation type="journal article" date="2000" name="Nature">
        <title>Sequence and analysis of chromosome 3 of the plant Arabidopsis thaliana.</title>
        <authorList>
            <person name="Salanoubat M."/>
            <person name="Lemcke K."/>
            <person name="Rieger M."/>
            <person name="Ansorge W."/>
            <person name="Unseld M."/>
            <person name="Fartmann B."/>
            <person name="Valle G."/>
            <person name="Bloecker H."/>
            <person name="Perez-Alonso M."/>
            <person name="Obermaier B."/>
            <person name="Delseny M."/>
            <person name="Boutry M."/>
            <person name="Grivell L.A."/>
            <person name="Mache R."/>
            <person name="Puigdomenech P."/>
            <person name="De Simone V."/>
            <person name="Choisne N."/>
            <person name="Artiguenave F."/>
            <person name="Robert C."/>
            <person name="Brottier P."/>
            <person name="Wincker P."/>
            <person name="Cattolico L."/>
            <person name="Weissenbach J."/>
            <person name="Saurin W."/>
            <person name="Quetier F."/>
            <person name="Schaefer M."/>
            <person name="Mueller-Auer S."/>
            <person name="Gabel C."/>
            <person name="Fuchs M."/>
            <person name="Benes V."/>
            <person name="Wurmbach E."/>
            <person name="Drzonek H."/>
            <person name="Erfle H."/>
            <person name="Jordan N."/>
            <person name="Bangert S."/>
            <person name="Wiedelmann R."/>
            <person name="Kranz H."/>
            <person name="Voss H."/>
            <person name="Holland R."/>
            <person name="Brandt P."/>
            <person name="Nyakatura G."/>
            <person name="Vezzi A."/>
            <person name="D'Angelo M."/>
            <person name="Pallavicini A."/>
            <person name="Toppo S."/>
            <person name="Simionati B."/>
            <person name="Conrad A."/>
            <person name="Hornischer K."/>
            <person name="Kauer G."/>
            <person name="Loehnert T.-H."/>
            <person name="Nordsiek G."/>
            <person name="Reichelt J."/>
            <person name="Scharfe M."/>
            <person name="Schoen O."/>
            <person name="Bargues M."/>
            <person name="Terol J."/>
            <person name="Climent J."/>
            <person name="Navarro P."/>
            <person name="Collado C."/>
            <person name="Perez-Perez A."/>
            <person name="Ottenwaelder B."/>
            <person name="Duchemin D."/>
            <person name="Cooke R."/>
            <person name="Laudie M."/>
            <person name="Berger-Llauro C."/>
            <person name="Purnelle B."/>
            <person name="Masuy D."/>
            <person name="de Haan M."/>
            <person name="Maarse A.C."/>
            <person name="Alcaraz J.-P."/>
            <person name="Cottet A."/>
            <person name="Casacuberta E."/>
            <person name="Monfort A."/>
            <person name="Argiriou A."/>
            <person name="Flores M."/>
            <person name="Liguori R."/>
            <person name="Vitale D."/>
            <person name="Mannhaupt G."/>
            <person name="Haase D."/>
            <person name="Schoof H."/>
            <person name="Rudd S."/>
            <person name="Zaccaria P."/>
            <person name="Mewes H.-W."/>
            <person name="Mayer K.F.X."/>
            <person name="Kaul S."/>
            <person name="Town C.D."/>
            <person name="Koo H.L."/>
            <person name="Tallon L.J."/>
            <person name="Jenkins J."/>
            <person name="Rooney T."/>
            <person name="Rizzo M."/>
            <person name="Walts A."/>
            <person name="Utterback T."/>
            <person name="Fujii C.Y."/>
            <person name="Shea T.P."/>
            <person name="Creasy T.H."/>
            <person name="Haas B."/>
            <person name="Maiti R."/>
            <person name="Wu D."/>
            <person name="Peterson J."/>
            <person name="Van Aken S."/>
            <person name="Pai G."/>
            <person name="Militscher J."/>
            <person name="Sellers P."/>
            <person name="Gill J.E."/>
            <person name="Feldblyum T.V."/>
            <person name="Preuss D."/>
            <person name="Lin X."/>
            <person name="Nierman W.C."/>
            <person name="Salzberg S.L."/>
            <person name="White O."/>
            <person name="Venter J.C."/>
            <person name="Fraser C.M."/>
            <person name="Kaneko T."/>
            <person name="Nakamura Y."/>
            <person name="Sato S."/>
            <person name="Kato T."/>
            <person name="Asamizu E."/>
            <person name="Sasamoto S."/>
            <person name="Kimura T."/>
            <person name="Idesawa K."/>
            <person name="Kawashima K."/>
            <person name="Kishida Y."/>
            <person name="Kiyokawa C."/>
            <person name="Kohara M."/>
            <person name="Matsumoto M."/>
            <person name="Matsuno A."/>
            <person name="Muraki A."/>
            <person name="Nakayama S."/>
            <person name="Nakazaki N."/>
            <person name="Shinpo S."/>
            <person name="Takeuchi C."/>
            <person name="Wada T."/>
            <person name="Watanabe A."/>
            <person name="Yamada M."/>
            <person name="Yasuda M."/>
            <person name="Tabata S."/>
        </authorList>
    </citation>
    <scope>NUCLEOTIDE SEQUENCE [LARGE SCALE GENOMIC DNA]</scope>
    <source>
        <strain>cv. Columbia</strain>
    </source>
</reference>
<reference key="4">
    <citation type="journal article" date="2017" name="Plant J.">
        <title>Araport11: a complete reannotation of the Arabidopsis thaliana reference genome.</title>
        <authorList>
            <person name="Cheng C.Y."/>
            <person name="Krishnakumar V."/>
            <person name="Chan A.P."/>
            <person name="Thibaud-Nissen F."/>
            <person name="Schobel S."/>
            <person name="Town C.D."/>
        </authorList>
    </citation>
    <scope>GENOME REANNOTATION</scope>
    <source>
        <strain>cv. Columbia</strain>
    </source>
</reference>
<reference key="5">
    <citation type="journal article" date="2003" name="Science">
        <title>Empirical analysis of transcriptional activity in the Arabidopsis genome.</title>
        <authorList>
            <person name="Yamada K."/>
            <person name="Lim J."/>
            <person name="Dale J.M."/>
            <person name="Chen H."/>
            <person name="Shinn P."/>
            <person name="Palm C.J."/>
            <person name="Southwick A.M."/>
            <person name="Wu H.C."/>
            <person name="Kim C.J."/>
            <person name="Nguyen M."/>
            <person name="Pham P.K."/>
            <person name="Cheuk R.F."/>
            <person name="Karlin-Newmann G."/>
            <person name="Liu S.X."/>
            <person name="Lam B."/>
            <person name="Sakano H."/>
            <person name="Wu T."/>
            <person name="Yu G."/>
            <person name="Miranda M."/>
            <person name="Quach H.L."/>
            <person name="Tripp M."/>
            <person name="Chang C.H."/>
            <person name="Lee J.M."/>
            <person name="Toriumi M.J."/>
            <person name="Chan M.M."/>
            <person name="Tang C.C."/>
            <person name="Onodera C.S."/>
            <person name="Deng J.M."/>
            <person name="Akiyama K."/>
            <person name="Ansari Y."/>
            <person name="Arakawa T."/>
            <person name="Banh J."/>
            <person name="Banno F."/>
            <person name="Bowser L."/>
            <person name="Brooks S.Y."/>
            <person name="Carninci P."/>
            <person name="Chao Q."/>
            <person name="Choy N."/>
            <person name="Enju A."/>
            <person name="Goldsmith A.D."/>
            <person name="Gurjal M."/>
            <person name="Hansen N.F."/>
            <person name="Hayashizaki Y."/>
            <person name="Johnson-Hopson C."/>
            <person name="Hsuan V.W."/>
            <person name="Iida K."/>
            <person name="Karnes M."/>
            <person name="Khan S."/>
            <person name="Koesema E."/>
            <person name="Ishida J."/>
            <person name="Jiang P.X."/>
            <person name="Jones T."/>
            <person name="Kawai J."/>
            <person name="Kamiya A."/>
            <person name="Meyers C."/>
            <person name="Nakajima M."/>
            <person name="Narusaka M."/>
            <person name="Seki M."/>
            <person name="Sakurai T."/>
            <person name="Satou M."/>
            <person name="Tamse R."/>
            <person name="Vaysberg M."/>
            <person name="Wallender E.K."/>
            <person name="Wong C."/>
            <person name="Yamamura Y."/>
            <person name="Yuan S."/>
            <person name="Shinozaki K."/>
            <person name="Davis R.W."/>
            <person name="Theologis A."/>
            <person name="Ecker J.R."/>
        </authorList>
    </citation>
    <scope>NUCLEOTIDE SEQUENCE [LARGE SCALE MRNA]</scope>
    <source>
        <strain>cv. Columbia</strain>
    </source>
</reference>
<reference key="6">
    <citation type="submission" date="1993-09" db="EMBL/GenBank/DDBJ databases">
        <title>The Arabidopsis thaliana transcribed genome: the GDR cDNA program.</title>
        <authorList>
            <person name="Philipps G."/>
            <person name="Gigot C."/>
        </authorList>
    </citation>
    <scope>NUCLEOTIDE SEQUENCE [MRNA] OF 9-125</scope>
</reference>
<reference key="7">
    <citation type="journal article" date="2015" name="J. Exp. Bot.">
        <title>Identification of cleavage sites and substrate proteins for two mitochondrial intermediate peptidases in Arabidopsis thaliana.</title>
        <authorList>
            <person name="Carrie C."/>
            <person name="Venne A.S."/>
            <person name="Zahedi R.P."/>
            <person name="Soll J."/>
        </authorList>
    </citation>
    <scope>IDENTIFICATION BY MASS SPECTROMETRY</scope>
    <scope>CLEAVAGE OF TRANSIT PEPTIDE AFTER PHE-38</scope>
</reference>
<name>AL2B4_ARATH</name>
<comment type="function">
    <text evidence="4">Possesses activity on acetaldehyde and glycolaldehyde in vitro.</text>
</comment>
<comment type="catalytic activity">
    <reaction>
        <text>an aldehyde + NAD(+) + H2O = a carboxylate + NADH + 2 H(+)</text>
        <dbReference type="Rhea" id="RHEA:16185"/>
        <dbReference type="ChEBI" id="CHEBI:15377"/>
        <dbReference type="ChEBI" id="CHEBI:15378"/>
        <dbReference type="ChEBI" id="CHEBI:17478"/>
        <dbReference type="ChEBI" id="CHEBI:29067"/>
        <dbReference type="ChEBI" id="CHEBI:57540"/>
        <dbReference type="ChEBI" id="CHEBI:57945"/>
        <dbReference type="EC" id="1.2.1.3"/>
    </reaction>
</comment>
<comment type="subunit">
    <text evidence="1">Homotetramer.</text>
</comment>
<comment type="subcellular location">
    <subcellularLocation>
        <location evidence="7">Mitochondrion matrix</location>
    </subcellularLocation>
</comment>
<comment type="similarity">
    <text evidence="6">Belongs to the aldehyde dehydrogenase family.</text>
</comment>
<dbReference type="EC" id="1.2.1.3"/>
<dbReference type="EMBL" id="AB030820">
    <property type="protein sequence ID" value="BAA96792.1"/>
    <property type="molecule type" value="mRNA"/>
</dbReference>
<dbReference type="EMBL" id="AF349447">
    <property type="protein sequence ID" value="AAM27003.1"/>
    <property type="molecule type" value="mRNA"/>
</dbReference>
<dbReference type="EMBL" id="AL049658">
    <property type="protein sequence ID" value="CAB41139.1"/>
    <property type="molecule type" value="Genomic_DNA"/>
</dbReference>
<dbReference type="EMBL" id="CP002686">
    <property type="protein sequence ID" value="AEE78355.1"/>
    <property type="molecule type" value="Genomic_DNA"/>
</dbReference>
<dbReference type="EMBL" id="AF327426">
    <property type="protein sequence ID" value="AAG42016.1"/>
    <property type="molecule type" value="mRNA"/>
</dbReference>
<dbReference type="EMBL" id="AF349522">
    <property type="protein sequence ID" value="AAK15569.1"/>
    <property type="molecule type" value="mRNA"/>
</dbReference>
<dbReference type="EMBL" id="AF372911">
    <property type="protein sequence ID" value="AAK49627.1"/>
    <property type="molecule type" value="mRNA"/>
</dbReference>
<dbReference type="EMBL" id="AY090443">
    <property type="protein sequence ID" value="AAL91287.1"/>
    <property type="molecule type" value="mRNA"/>
</dbReference>
<dbReference type="EMBL" id="BT000752">
    <property type="protein sequence ID" value="AAN31892.1"/>
    <property type="molecule type" value="mRNA"/>
</dbReference>
<dbReference type="EMBL" id="BT006371">
    <property type="protein sequence ID" value="AAP21179.1"/>
    <property type="molecule type" value="mRNA"/>
</dbReference>
<dbReference type="EMBL" id="Z26417">
    <property type="protein sequence ID" value="CAA81249.1"/>
    <property type="molecule type" value="mRNA"/>
</dbReference>
<dbReference type="PIR" id="T06683">
    <property type="entry name" value="T06683"/>
</dbReference>
<dbReference type="RefSeq" id="NP_190383.1">
    <property type="nucleotide sequence ID" value="NM_114669.4"/>
</dbReference>
<dbReference type="SMR" id="Q9SU63"/>
<dbReference type="BioGRID" id="9274">
    <property type="interactions" value="4"/>
</dbReference>
<dbReference type="FunCoup" id="Q9SU63">
    <property type="interactions" value="2611"/>
</dbReference>
<dbReference type="STRING" id="3702.Q9SU63"/>
<dbReference type="PaxDb" id="3702-AT3G48000.1"/>
<dbReference type="ProteomicsDB" id="244707"/>
<dbReference type="EnsemblPlants" id="AT3G48000.1">
    <property type="protein sequence ID" value="AT3G48000.1"/>
    <property type="gene ID" value="AT3G48000"/>
</dbReference>
<dbReference type="GeneID" id="823955"/>
<dbReference type="Gramene" id="AT3G48000.1">
    <property type="protein sequence ID" value="AT3G48000.1"/>
    <property type="gene ID" value="AT3G48000"/>
</dbReference>
<dbReference type="KEGG" id="ath:AT3G48000"/>
<dbReference type="Araport" id="AT3G48000"/>
<dbReference type="TAIR" id="AT3G48000">
    <property type="gene designation" value="ALDH2B4"/>
</dbReference>
<dbReference type="eggNOG" id="KOG2450">
    <property type="taxonomic scope" value="Eukaryota"/>
</dbReference>
<dbReference type="HOGENOM" id="CLU_005391_0_1_1"/>
<dbReference type="InParanoid" id="Q9SU63"/>
<dbReference type="OMA" id="IFLPDVM"/>
<dbReference type="PhylomeDB" id="Q9SU63"/>
<dbReference type="BioCyc" id="ARA:AT3G48000-MONOMER"/>
<dbReference type="CD-CODE" id="4299E36E">
    <property type="entry name" value="Nucleolus"/>
</dbReference>
<dbReference type="PRO" id="PR:Q9SU63"/>
<dbReference type="Proteomes" id="UP000006548">
    <property type="component" value="Chromosome 3"/>
</dbReference>
<dbReference type="ExpressionAtlas" id="Q9SU63">
    <property type="expression patterns" value="baseline and differential"/>
</dbReference>
<dbReference type="GO" id="GO:0005829">
    <property type="term" value="C:cytosol"/>
    <property type="evidence" value="ECO:0007005"/>
    <property type="project" value="TAIR"/>
</dbReference>
<dbReference type="GO" id="GO:0005759">
    <property type="term" value="C:mitochondrial matrix"/>
    <property type="evidence" value="ECO:0007669"/>
    <property type="project" value="UniProtKB-SubCell"/>
</dbReference>
<dbReference type="GO" id="GO:0005739">
    <property type="term" value="C:mitochondrion"/>
    <property type="evidence" value="ECO:0007005"/>
    <property type="project" value="TAIR"/>
</dbReference>
<dbReference type="GO" id="GO:0004029">
    <property type="term" value="F:aldehyde dehydrogenase (NAD+) activity"/>
    <property type="evidence" value="ECO:0000250"/>
    <property type="project" value="TAIR"/>
</dbReference>
<dbReference type="GO" id="GO:0005524">
    <property type="term" value="F:ATP binding"/>
    <property type="evidence" value="ECO:0007005"/>
    <property type="project" value="TAIR"/>
</dbReference>
<dbReference type="CDD" id="cd07142">
    <property type="entry name" value="ALDH_F2BC"/>
    <property type="match status" value="1"/>
</dbReference>
<dbReference type="FunFam" id="3.40.605.10:FF:000011">
    <property type="entry name" value="ALD5p Mitochondrial aldehyde dehydrogenase"/>
    <property type="match status" value="1"/>
</dbReference>
<dbReference type="FunFam" id="3.40.605.10:FF:000026">
    <property type="entry name" value="Aldehyde dehydrogenase, putative"/>
    <property type="match status" value="1"/>
</dbReference>
<dbReference type="FunFam" id="3.40.309.10:FF:000001">
    <property type="entry name" value="Mitochondrial aldehyde dehydrogenase 2"/>
    <property type="match status" value="1"/>
</dbReference>
<dbReference type="Gene3D" id="3.40.605.10">
    <property type="entry name" value="Aldehyde Dehydrogenase, Chain A, domain 1"/>
    <property type="match status" value="1"/>
</dbReference>
<dbReference type="Gene3D" id="3.40.309.10">
    <property type="entry name" value="Aldehyde Dehydrogenase, Chain A, domain 2"/>
    <property type="match status" value="1"/>
</dbReference>
<dbReference type="InterPro" id="IPR016161">
    <property type="entry name" value="Ald_DH/histidinol_DH"/>
</dbReference>
<dbReference type="InterPro" id="IPR016163">
    <property type="entry name" value="Ald_DH_C"/>
</dbReference>
<dbReference type="InterPro" id="IPR016160">
    <property type="entry name" value="Ald_DH_CS_CYS"/>
</dbReference>
<dbReference type="InterPro" id="IPR029510">
    <property type="entry name" value="Ald_DH_CS_GLU"/>
</dbReference>
<dbReference type="InterPro" id="IPR016162">
    <property type="entry name" value="Ald_DH_N"/>
</dbReference>
<dbReference type="InterPro" id="IPR015590">
    <property type="entry name" value="Aldehyde_DH_dom"/>
</dbReference>
<dbReference type="PANTHER" id="PTHR11699">
    <property type="entry name" value="ALDEHYDE DEHYDROGENASE-RELATED"/>
    <property type="match status" value="1"/>
</dbReference>
<dbReference type="Pfam" id="PF00171">
    <property type="entry name" value="Aldedh"/>
    <property type="match status" value="1"/>
</dbReference>
<dbReference type="SUPFAM" id="SSF53720">
    <property type="entry name" value="ALDH-like"/>
    <property type="match status" value="1"/>
</dbReference>
<dbReference type="PROSITE" id="PS00070">
    <property type="entry name" value="ALDEHYDE_DEHYDR_CYS"/>
    <property type="match status" value="1"/>
</dbReference>
<dbReference type="PROSITE" id="PS00687">
    <property type="entry name" value="ALDEHYDE_DEHYDR_GLU"/>
    <property type="match status" value="1"/>
</dbReference>
<proteinExistence type="evidence at protein level"/>
<keyword id="KW-0496">Mitochondrion</keyword>
<keyword id="KW-0520">NAD</keyword>
<keyword id="KW-0560">Oxidoreductase</keyword>
<keyword id="KW-1185">Reference proteome</keyword>
<keyword id="KW-0809">Transit peptide</keyword>
<feature type="transit peptide" description="Mitochondrion" evidence="5">
    <location>
        <begin position="1"/>
        <end position="38"/>
    </location>
</feature>
<feature type="chain" id="PRO_0000256056" description="Aldehyde dehydrogenase family 2 member B4, mitochondrial">
    <location>
        <begin position="39"/>
        <end position="538"/>
    </location>
</feature>
<feature type="active site" description="Proton acceptor" evidence="2 3">
    <location>
        <position position="305"/>
    </location>
</feature>
<feature type="active site" description="Nucleophile" evidence="2 3">
    <location>
        <position position="339"/>
    </location>
</feature>
<feature type="binding site" evidence="1">
    <location>
        <begin position="282"/>
        <end position="287"/>
    </location>
    <ligand>
        <name>NAD(+)</name>
        <dbReference type="ChEBI" id="CHEBI:57540"/>
    </ligand>
</feature>
<feature type="site" description="Transition state stabilizer" evidence="1">
    <location>
        <position position="206"/>
    </location>
</feature>
<feature type="sequence conflict" description="In Ref. 6; CAA81249." evidence="6" ref="6">
    <original>L</original>
    <variation>C</variation>
    <location>
        <position position="125"/>
    </location>
</feature>
<evidence type="ECO:0000250" key="1"/>
<evidence type="ECO:0000255" key="2">
    <source>
        <dbReference type="PROSITE-ProRule" id="PRU10007"/>
    </source>
</evidence>
<evidence type="ECO:0000255" key="3">
    <source>
        <dbReference type="PROSITE-ProRule" id="PRU10008"/>
    </source>
</evidence>
<evidence type="ECO:0000269" key="4">
    <source>
    </source>
</evidence>
<evidence type="ECO:0000269" key="5">
    <source>
    </source>
</evidence>
<evidence type="ECO:0000305" key="6"/>
<evidence type="ECO:0000305" key="7">
    <source>
    </source>
</evidence>
<accession>Q9SU63</accession>
<accession>Q42090</accession>
<organism>
    <name type="scientific">Arabidopsis thaliana</name>
    <name type="common">Mouse-ear cress</name>
    <dbReference type="NCBI Taxonomy" id="3702"/>
    <lineage>
        <taxon>Eukaryota</taxon>
        <taxon>Viridiplantae</taxon>
        <taxon>Streptophyta</taxon>
        <taxon>Embryophyta</taxon>
        <taxon>Tracheophyta</taxon>
        <taxon>Spermatophyta</taxon>
        <taxon>Magnoliopsida</taxon>
        <taxon>eudicotyledons</taxon>
        <taxon>Gunneridae</taxon>
        <taxon>Pentapetalae</taxon>
        <taxon>rosids</taxon>
        <taxon>malvids</taxon>
        <taxon>Brassicales</taxon>
        <taxon>Brassicaceae</taxon>
        <taxon>Camelineae</taxon>
        <taxon>Arabidopsis</taxon>
    </lineage>
</organism>
<protein>
    <recommendedName>
        <fullName>Aldehyde dehydrogenase family 2 member B4, mitochondrial</fullName>
        <shortName>ALDH2a</shortName>
        <ecNumber>1.2.1.3</ecNumber>
    </recommendedName>
</protein>
<sequence length="538" mass="58589">MAARRVSSLLSRSFSASSPLLFRSQGRNCYNGGILRRFGTSSAAAEEIINPSVQVSHTQLLINGNFVDSASGKTFPTLDPRTGEVIAHVAEGDAEDINRAVKAARTAFDEGPWPKMSAYERSRVLLRFADLVEKHSEELASLETWDNGKPYQQSLTAEIPMFARLFRYYAGWADKIHGLTIPADGNYQVHTLHEPIGVAGQIIPWNFPLLMFAWKVGPALACGNTIVLKTAEQTPLTAFYAGKLFLEAGLPPGVLNIVSGFGATAGAALASHMDVDKLAFTGSTDTGKVILGLAANSNLKPVTLELGGKSPFIVFEDADIDKAVELAHFALFFNQGQCCCAGSRTFVHEKVYDEFVEKSKARALKRVVGDPFRKGIEQGPQIDLKQFEKVMKYIKSGIESNATLECGGDQIGDKGYFIQPTVFSNVKDDMLIAQDEIFGPVQSILKFSDVDEVIKRANETKYGLAAGVFTKNLDTANRVSRALKAGTVWVNCFDVFDAAIPFGGYKMSGNGREKGIYSLNNYLQIKAVVTALNKPAWI</sequence>